<evidence type="ECO:0000255" key="1">
    <source>
        <dbReference type="HAMAP-Rule" id="MF_00184"/>
    </source>
</evidence>
<gene>
    <name evidence="1" type="primary">thrS</name>
    <name type="ordered locus">Hac_1457</name>
</gene>
<keyword id="KW-0030">Aminoacyl-tRNA synthetase</keyword>
<keyword id="KW-0067">ATP-binding</keyword>
<keyword id="KW-0963">Cytoplasm</keyword>
<keyword id="KW-0436">Ligase</keyword>
<keyword id="KW-0479">Metal-binding</keyword>
<keyword id="KW-0547">Nucleotide-binding</keyword>
<keyword id="KW-0648">Protein biosynthesis</keyword>
<keyword id="KW-0694">RNA-binding</keyword>
<keyword id="KW-0820">tRNA-binding</keyword>
<keyword id="KW-0862">Zinc</keyword>
<proteinExistence type="inferred from homology"/>
<accession>Q17VZ5</accession>
<protein>
    <recommendedName>
        <fullName evidence="1">Threonine--tRNA ligase</fullName>
        <ecNumber evidence="1">6.1.1.3</ecNumber>
    </recommendedName>
    <alternativeName>
        <fullName evidence="1">Threonyl-tRNA synthetase</fullName>
        <shortName evidence="1">ThrRS</shortName>
    </alternativeName>
</protein>
<name>SYT_HELAH</name>
<reference key="1">
    <citation type="journal article" date="2006" name="PLoS Genet.">
        <title>Who ate whom? Adaptive Helicobacter genomic changes that accompanied a host jump from early humans to large felines.</title>
        <authorList>
            <person name="Eppinger M."/>
            <person name="Baar C."/>
            <person name="Linz B."/>
            <person name="Raddatz G."/>
            <person name="Lanz C."/>
            <person name="Keller H."/>
            <person name="Morelli G."/>
            <person name="Gressmann H."/>
            <person name="Achtman M."/>
            <person name="Schuster S.C."/>
        </authorList>
    </citation>
    <scope>NUCLEOTIDE SEQUENCE [LARGE SCALE GENOMIC DNA]</scope>
    <source>
        <strain>Sheeba</strain>
    </source>
</reference>
<sequence>MSAELIAVYKDEQIIDLESAKVLGLSDGVKALKGSEPIYFDDSPLALEVIRHSCAHLLAQSLKALYPDAKFFVGPVVEEGFYYDFKTASKISEEDLPKIEAKMKEFAKSKLAITKEVLTKEQALERFKGDELKHAVMSKISGDAFGVYQQGGFEDLCKGPHLPNTRFLNHFKLTKLAGAYLGGDEKNEMLIRIYGIAFATKEGLKDYLFQIEEAKKRDHRKLGVELGLFSFDDEIGAGLPLWLPKGARLRKRIEDLLSKALLLRGYEPVKGPEILKSDVWKISGHYDNYKENMYFTTIDEQEYGIKPMNCVGHIKVYQSALHSYRDLPLRFYEYGVVHRHEKSGVLHGLLRVREFTQDDAHIFCSFEQIQSEVSAILDFTHKIMKAFDFSYEMELSTRPAKSIGDDKVWEKATNALKEALKEHHINYKIDEGGGAFYGPKIDIKITDALKRKWQCGTIQVDMNLPERFKLAFTNEHNNAEQPVMIHRAILGSFERFIAILSEHFWGNFPFFVAPTQIVLIPINEEHHVFALKLKEELKKRDIFVEVLDKNDSLNKKVRLAEKQKIPMILVLGNEEMETEILSIRDREKQAQYKMPLKEFLNMVESKMQEVSF</sequence>
<organism>
    <name type="scientific">Helicobacter acinonychis (strain Sheeba)</name>
    <dbReference type="NCBI Taxonomy" id="382638"/>
    <lineage>
        <taxon>Bacteria</taxon>
        <taxon>Pseudomonadati</taxon>
        <taxon>Campylobacterota</taxon>
        <taxon>Epsilonproteobacteria</taxon>
        <taxon>Campylobacterales</taxon>
        <taxon>Helicobacteraceae</taxon>
        <taxon>Helicobacter</taxon>
    </lineage>
</organism>
<dbReference type="EC" id="6.1.1.3" evidence="1"/>
<dbReference type="EMBL" id="AM260522">
    <property type="protein sequence ID" value="CAK00181.1"/>
    <property type="molecule type" value="Genomic_DNA"/>
</dbReference>
<dbReference type="RefSeq" id="WP_011578271.1">
    <property type="nucleotide sequence ID" value="NC_008229.1"/>
</dbReference>
<dbReference type="SMR" id="Q17VZ5"/>
<dbReference type="STRING" id="382638.Hac_1457"/>
<dbReference type="GeneID" id="31758742"/>
<dbReference type="KEGG" id="hac:Hac_1457"/>
<dbReference type="eggNOG" id="COG0441">
    <property type="taxonomic scope" value="Bacteria"/>
</dbReference>
<dbReference type="HOGENOM" id="CLU_008554_0_1_7"/>
<dbReference type="OrthoDB" id="9802304at2"/>
<dbReference type="BioCyc" id="HACI382638:HAC_RS06195-MONOMER"/>
<dbReference type="Proteomes" id="UP000000775">
    <property type="component" value="Chromosome"/>
</dbReference>
<dbReference type="GO" id="GO:0005829">
    <property type="term" value="C:cytosol"/>
    <property type="evidence" value="ECO:0007669"/>
    <property type="project" value="TreeGrafter"/>
</dbReference>
<dbReference type="GO" id="GO:0005524">
    <property type="term" value="F:ATP binding"/>
    <property type="evidence" value="ECO:0007669"/>
    <property type="project" value="UniProtKB-UniRule"/>
</dbReference>
<dbReference type="GO" id="GO:0046872">
    <property type="term" value="F:metal ion binding"/>
    <property type="evidence" value="ECO:0007669"/>
    <property type="project" value="UniProtKB-KW"/>
</dbReference>
<dbReference type="GO" id="GO:0004829">
    <property type="term" value="F:threonine-tRNA ligase activity"/>
    <property type="evidence" value="ECO:0007669"/>
    <property type="project" value="UniProtKB-UniRule"/>
</dbReference>
<dbReference type="GO" id="GO:0000049">
    <property type="term" value="F:tRNA binding"/>
    <property type="evidence" value="ECO:0007669"/>
    <property type="project" value="UniProtKB-KW"/>
</dbReference>
<dbReference type="GO" id="GO:0006435">
    <property type="term" value="P:threonyl-tRNA aminoacylation"/>
    <property type="evidence" value="ECO:0007669"/>
    <property type="project" value="UniProtKB-UniRule"/>
</dbReference>
<dbReference type="CDD" id="cd00860">
    <property type="entry name" value="ThrRS_anticodon"/>
    <property type="match status" value="1"/>
</dbReference>
<dbReference type="CDD" id="cd00771">
    <property type="entry name" value="ThrRS_core"/>
    <property type="match status" value="1"/>
</dbReference>
<dbReference type="FunFam" id="3.30.930.10:FF:000019">
    <property type="entry name" value="Threonine--tRNA ligase"/>
    <property type="match status" value="1"/>
</dbReference>
<dbReference type="FunFam" id="3.30.980.10:FF:000005">
    <property type="entry name" value="Threonyl-tRNA synthetase, mitochondrial"/>
    <property type="match status" value="1"/>
</dbReference>
<dbReference type="Gene3D" id="3.30.54.20">
    <property type="match status" value="1"/>
</dbReference>
<dbReference type="Gene3D" id="3.40.50.800">
    <property type="entry name" value="Anticodon-binding domain"/>
    <property type="match status" value="1"/>
</dbReference>
<dbReference type="Gene3D" id="3.30.930.10">
    <property type="entry name" value="Bira Bifunctional Protein, Domain 2"/>
    <property type="match status" value="1"/>
</dbReference>
<dbReference type="Gene3D" id="3.30.980.10">
    <property type="entry name" value="Threonyl-trna Synthetase, Chain A, domain 2"/>
    <property type="match status" value="1"/>
</dbReference>
<dbReference type="HAMAP" id="MF_00184">
    <property type="entry name" value="Thr_tRNA_synth"/>
    <property type="match status" value="1"/>
</dbReference>
<dbReference type="InterPro" id="IPR002314">
    <property type="entry name" value="aa-tRNA-synt_IIb"/>
</dbReference>
<dbReference type="InterPro" id="IPR006195">
    <property type="entry name" value="aa-tRNA-synth_II"/>
</dbReference>
<dbReference type="InterPro" id="IPR045864">
    <property type="entry name" value="aa-tRNA-synth_II/BPL/LPL"/>
</dbReference>
<dbReference type="InterPro" id="IPR004154">
    <property type="entry name" value="Anticodon-bd"/>
</dbReference>
<dbReference type="InterPro" id="IPR036621">
    <property type="entry name" value="Anticodon-bd_dom_sf"/>
</dbReference>
<dbReference type="InterPro" id="IPR002320">
    <property type="entry name" value="Thr-tRNA-ligase_IIa"/>
</dbReference>
<dbReference type="InterPro" id="IPR018163">
    <property type="entry name" value="Thr/Ala-tRNA-synth_IIc_edit"/>
</dbReference>
<dbReference type="InterPro" id="IPR047246">
    <property type="entry name" value="ThrRS_anticodon"/>
</dbReference>
<dbReference type="InterPro" id="IPR033728">
    <property type="entry name" value="ThrRS_core"/>
</dbReference>
<dbReference type="InterPro" id="IPR012947">
    <property type="entry name" value="tRNA_SAD"/>
</dbReference>
<dbReference type="NCBIfam" id="TIGR00418">
    <property type="entry name" value="thrS"/>
    <property type="match status" value="1"/>
</dbReference>
<dbReference type="PANTHER" id="PTHR11451:SF44">
    <property type="entry name" value="THREONINE--TRNA LIGASE, CHLOROPLASTIC_MITOCHONDRIAL 2"/>
    <property type="match status" value="1"/>
</dbReference>
<dbReference type="PANTHER" id="PTHR11451">
    <property type="entry name" value="THREONINE-TRNA LIGASE"/>
    <property type="match status" value="1"/>
</dbReference>
<dbReference type="Pfam" id="PF03129">
    <property type="entry name" value="HGTP_anticodon"/>
    <property type="match status" value="1"/>
</dbReference>
<dbReference type="Pfam" id="PF00587">
    <property type="entry name" value="tRNA-synt_2b"/>
    <property type="match status" value="1"/>
</dbReference>
<dbReference type="Pfam" id="PF07973">
    <property type="entry name" value="tRNA_SAD"/>
    <property type="match status" value="1"/>
</dbReference>
<dbReference type="PRINTS" id="PR01047">
    <property type="entry name" value="TRNASYNTHTHR"/>
</dbReference>
<dbReference type="SMART" id="SM00863">
    <property type="entry name" value="tRNA_SAD"/>
    <property type="match status" value="1"/>
</dbReference>
<dbReference type="SUPFAM" id="SSF52954">
    <property type="entry name" value="Class II aaRS ABD-related"/>
    <property type="match status" value="1"/>
</dbReference>
<dbReference type="SUPFAM" id="SSF55681">
    <property type="entry name" value="Class II aaRS and biotin synthetases"/>
    <property type="match status" value="1"/>
</dbReference>
<dbReference type="SUPFAM" id="SSF55186">
    <property type="entry name" value="ThrRS/AlaRS common domain"/>
    <property type="match status" value="1"/>
</dbReference>
<dbReference type="PROSITE" id="PS50862">
    <property type="entry name" value="AA_TRNA_LIGASE_II"/>
    <property type="match status" value="1"/>
</dbReference>
<feature type="chain" id="PRO_1000020404" description="Threonine--tRNA ligase">
    <location>
        <begin position="1"/>
        <end position="612"/>
    </location>
</feature>
<feature type="region of interest" description="Catalytic" evidence="1">
    <location>
        <begin position="218"/>
        <end position="509"/>
    </location>
</feature>
<feature type="binding site" evidence="1">
    <location>
        <position position="310"/>
    </location>
    <ligand>
        <name>Zn(2+)</name>
        <dbReference type="ChEBI" id="CHEBI:29105"/>
    </ligand>
</feature>
<feature type="binding site" evidence="1">
    <location>
        <position position="361"/>
    </location>
    <ligand>
        <name>Zn(2+)</name>
        <dbReference type="ChEBI" id="CHEBI:29105"/>
    </ligand>
</feature>
<feature type="binding site" evidence="1">
    <location>
        <position position="486"/>
    </location>
    <ligand>
        <name>Zn(2+)</name>
        <dbReference type="ChEBI" id="CHEBI:29105"/>
    </ligand>
</feature>
<comment type="function">
    <text evidence="1">Catalyzes the attachment of threonine to tRNA(Thr) in a two-step reaction: L-threonine is first activated by ATP to form Thr-AMP and then transferred to the acceptor end of tRNA(Thr). Also edits incorrectly charged L-seryl-tRNA(Thr).</text>
</comment>
<comment type="catalytic activity">
    <reaction evidence="1">
        <text>tRNA(Thr) + L-threonine + ATP = L-threonyl-tRNA(Thr) + AMP + diphosphate + H(+)</text>
        <dbReference type="Rhea" id="RHEA:24624"/>
        <dbReference type="Rhea" id="RHEA-COMP:9670"/>
        <dbReference type="Rhea" id="RHEA-COMP:9704"/>
        <dbReference type="ChEBI" id="CHEBI:15378"/>
        <dbReference type="ChEBI" id="CHEBI:30616"/>
        <dbReference type="ChEBI" id="CHEBI:33019"/>
        <dbReference type="ChEBI" id="CHEBI:57926"/>
        <dbReference type="ChEBI" id="CHEBI:78442"/>
        <dbReference type="ChEBI" id="CHEBI:78534"/>
        <dbReference type="ChEBI" id="CHEBI:456215"/>
        <dbReference type="EC" id="6.1.1.3"/>
    </reaction>
</comment>
<comment type="cofactor">
    <cofactor evidence="1">
        <name>Zn(2+)</name>
        <dbReference type="ChEBI" id="CHEBI:29105"/>
    </cofactor>
    <text evidence="1">Binds 1 zinc ion per subunit.</text>
</comment>
<comment type="subunit">
    <text evidence="1">Homodimer.</text>
</comment>
<comment type="subcellular location">
    <subcellularLocation>
        <location evidence="1">Cytoplasm</location>
    </subcellularLocation>
</comment>
<comment type="similarity">
    <text evidence="1">Belongs to the class-II aminoacyl-tRNA synthetase family.</text>
</comment>